<proteinExistence type="inferred from homology"/>
<reference key="1">
    <citation type="journal article" date="2005" name="Proc. Natl. Acad. Sci. U.S.A.">
        <title>Complete genome sequence of the probiotic lactic acid bacterium Lactobacillus acidophilus NCFM.</title>
        <authorList>
            <person name="Altermann E."/>
            <person name="Russell W.M."/>
            <person name="Azcarate-Peril M.A."/>
            <person name="Barrangou R."/>
            <person name="Buck B.L."/>
            <person name="McAuliffe O."/>
            <person name="Souther N."/>
            <person name="Dobson A."/>
            <person name="Duong T."/>
            <person name="Callanan M."/>
            <person name="Lick S."/>
            <person name="Hamrick A."/>
            <person name="Cano R."/>
            <person name="Klaenhammer T.R."/>
        </authorList>
    </citation>
    <scope>NUCLEOTIDE SEQUENCE [LARGE SCALE GENOMIC DNA]</scope>
    <source>
        <strain>ATCC 700396 / NCK56 / N2 / NCFM</strain>
    </source>
</reference>
<name>RL29_LACAC</name>
<feature type="chain" id="PRO_0000130403" description="Large ribosomal subunit protein uL29">
    <location>
        <begin position="1"/>
        <end position="65"/>
    </location>
</feature>
<keyword id="KW-1185">Reference proteome</keyword>
<keyword id="KW-0687">Ribonucleoprotein</keyword>
<keyword id="KW-0689">Ribosomal protein</keyword>
<evidence type="ECO:0000255" key="1">
    <source>
        <dbReference type="HAMAP-Rule" id="MF_00374"/>
    </source>
</evidence>
<evidence type="ECO:0000305" key="2"/>
<comment type="similarity">
    <text evidence="1">Belongs to the universal ribosomal protein uL29 family.</text>
</comment>
<dbReference type="EMBL" id="CP000033">
    <property type="protein sequence ID" value="AAV42192.1"/>
    <property type="molecule type" value="Genomic_DNA"/>
</dbReference>
<dbReference type="RefSeq" id="WP_003549032.1">
    <property type="nucleotide sequence ID" value="NC_006814.3"/>
</dbReference>
<dbReference type="RefSeq" id="YP_193223.1">
    <property type="nucleotide sequence ID" value="NC_006814.3"/>
</dbReference>
<dbReference type="SMR" id="Q5FM82"/>
<dbReference type="STRING" id="272621.LBA0299"/>
<dbReference type="GeneID" id="93290593"/>
<dbReference type="KEGG" id="lac:LBA0299"/>
<dbReference type="PATRIC" id="fig|272621.13.peg.285"/>
<dbReference type="eggNOG" id="COG0255">
    <property type="taxonomic scope" value="Bacteria"/>
</dbReference>
<dbReference type="HOGENOM" id="CLU_158491_5_2_9"/>
<dbReference type="OrthoDB" id="9815192at2"/>
<dbReference type="BioCyc" id="LACI272621:G1G49-293-MONOMER"/>
<dbReference type="PRO" id="PR:Q5FM82"/>
<dbReference type="Proteomes" id="UP000006381">
    <property type="component" value="Chromosome"/>
</dbReference>
<dbReference type="GO" id="GO:0022625">
    <property type="term" value="C:cytosolic large ribosomal subunit"/>
    <property type="evidence" value="ECO:0007669"/>
    <property type="project" value="TreeGrafter"/>
</dbReference>
<dbReference type="GO" id="GO:0003735">
    <property type="term" value="F:structural constituent of ribosome"/>
    <property type="evidence" value="ECO:0007669"/>
    <property type="project" value="InterPro"/>
</dbReference>
<dbReference type="GO" id="GO:0006412">
    <property type="term" value="P:translation"/>
    <property type="evidence" value="ECO:0007669"/>
    <property type="project" value="UniProtKB-UniRule"/>
</dbReference>
<dbReference type="CDD" id="cd00427">
    <property type="entry name" value="Ribosomal_L29_HIP"/>
    <property type="match status" value="1"/>
</dbReference>
<dbReference type="FunFam" id="1.10.287.310:FF:000001">
    <property type="entry name" value="50S ribosomal protein L29"/>
    <property type="match status" value="1"/>
</dbReference>
<dbReference type="Gene3D" id="1.10.287.310">
    <property type="match status" value="1"/>
</dbReference>
<dbReference type="HAMAP" id="MF_00374">
    <property type="entry name" value="Ribosomal_uL29"/>
    <property type="match status" value="1"/>
</dbReference>
<dbReference type="InterPro" id="IPR050063">
    <property type="entry name" value="Ribosomal_protein_uL29"/>
</dbReference>
<dbReference type="InterPro" id="IPR001854">
    <property type="entry name" value="Ribosomal_uL29"/>
</dbReference>
<dbReference type="InterPro" id="IPR018254">
    <property type="entry name" value="Ribosomal_uL29_CS"/>
</dbReference>
<dbReference type="InterPro" id="IPR036049">
    <property type="entry name" value="Ribosomal_uL29_sf"/>
</dbReference>
<dbReference type="NCBIfam" id="TIGR00012">
    <property type="entry name" value="L29"/>
    <property type="match status" value="1"/>
</dbReference>
<dbReference type="PANTHER" id="PTHR10916">
    <property type="entry name" value="60S RIBOSOMAL PROTEIN L35/50S RIBOSOMAL PROTEIN L29"/>
    <property type="match status" value="1"/>
</dbReference>
<dbReference type="PANTHER" id="PTHR10916:SF0">
    <property type="entry name" value="LARGE RIBOSOMAL SUBUNIT PROTEIN UL29C"/>
    <property type="match status" value="1"/>
</dbReference>
<dbReference type="Pfam" id="PF00831">
    <property type="entry name" value="Ribosomal_L29"/>
    <property type="match status" value="1"/>
</dbReference>
<dbReference type="SUPFAM" id="SSF46561">
    <property type="entry name" value="Ribosomal protein L29 (L29p)"/>
    <property type="match status" value="1"/>
</dbReference>
<dbReference type="PROSITE" id="PS00579">
    <property type="entry name" value="RIBOSOMAL_L29"/>
    <property type="match status" value="1"/>
</dbReference>
<sequence length="65" mass="7639">MKAKDIRALTTDEMLEKEKQYKEELFNLRFQQATGQLENTARLSKVRKNIARIKTILSEKALENN</sequence>
<organism>
    <name type="scientific">Lactobacillus acidophilus (strain ATCC 700396 / NCK56 / N2 / NCFM)</name>
    <dbReference type="NCBI Taxonomy" id="272621"/>
    <lineage>
        <taxon>Bacteria</taxon>
        <taxon>Bacillati</taxon>
        <taxon>Bacillota</taxon>
        <taxon>Bacilli</taxon>
        <taxon>Lactobacillales</taxon>
        <taxon>Lactobacillaceae</taxon>
        <taxon>Lactobacillus</taxon>
    </lineage>
</organism>
<accession>Q5FM82</accession>
<gene>
    <name evidence="1" type="primary">rpmC</name>
    <name type="ordered locus">LBA0299</name>
</gene>
<protein>
    <recommendedName>
        <fullName evidence="1">Large ribosomal subunit protein uL29</fullName>
    </recommendedName>
    <alternativeName>
        <fullName evidence="2">50S ribosomal protein L29</fullName>
    </alternativeName>
</protein>